<feature type="signal peptide" evidence="2">
    <location>
        <begin position="1"/>
        <end position="33"/>
    </location>
</feature>
<feature type="chain" id="PRO_0000012900" description="Adhesion G protein-coupled receptor A3">
    <location>
        <begin position="34"/>
        <end position="1321"/>
    </location>
</feature>
<feature type="topological domain" description="Extracellular" evidence="11">
    <location>
        <begin position="34"/>
        <end position="761"/>
    </location>
</feature>
<feature type="transmembrane region" description="Helical; Name=1" evidence="2">
    <location>
        <begin position="762"/>
        <end position="782"/>
    </location>
</feature>
<feature type="topological domain" description="Cytoplasmic" evidence="11">
    <location>
        <begin position="783"/>
        <end position="796"/>
    </location>
</feature>
<feature type="transmembrane region" description="Helical; Name=2" evidence="2">
    <location>
        <begin position="797"/>
        <end position="817"/>
    </location>
</feature>
<feature type="topological domain" description="Extracellular" evidence="11">
    <location>
        <begin position="818"/>
        <end position="826"/>
    </location>
</feature>
<feature type="transmembrane region" description="Helical; Name=3" evidence="2">
    <location>
        <begin position="827"/>
        <end position="847"/>
    </location>
</feature>
<feature type="topological domain" description="Cytoplasmic" evidence="11">
    <location>
        <begin position="848"/>
        <end position="876"/>
    </location>
</feature>
<feature type="transmembrane region" description="Helical; Name=4" evidence="2">
    <location>
        <begin position="877"/>
        <end position="897"/>
    </location>
</feature>
<feature type="topological domain" description="Extracellular" evidence="11">
    <location>
        <begin position="898"/>
        <end position="919"/>
    </location>
</feature>
<feature type="transmembrane region" description="Helical; Name=5" evidence="2">
    <location>
        <begin position="920"/>
        <end position="940"/>
    </location>
</feature>
<feature type="topological domain" description="Cytoplasmic" evidence="11">
    <location>
        <begin position="941"/>
        <end position="996"/>
    </location>
</feature>
<feature type="transmembrane region" description="Helical; Name=6" evidence="2">
    <location>
        <begin position="997"/>
        <end position="1017"/>
    </location>
</feature>
<feature type="topological domain" description="Extracellular" evidence="11">
    <location>
        <begin position="1018"/>
        <end position="1024"/>
    </location>
</feature>
<feature type="transmembrane region" description="Helical; Name=7" evidence="2">
    <location>
        <begin position="1025"/>
        <end position="1045"/>
    </location>
</feature>
<feature type="topological domain" description="Cytoplasmic" evidence="11">
    <location>
        <begin position="1046"/>
        <end position="1321"/>
    </location>
</feature>
<feature type="repeat" description="LRR 1">
    <location>
        <begin position="82"/>
        <end position="103"/>
    </location>
</feature>
<feature type="repeat" description="LRR 2">
    <location>
        <begin position="106"/>
        <end position="127"/>
    </location>
</feature>
<feature type="repeat" description="LRR 3">
    <location>
        <begin position="130"/>
        <end position="151"/>
    </location>
</feature>
<feature type="repeat" description="LRR 4">
    <location>
        <begin position="154"/>
        <end position="175"/>
    </location>
</feature>
<feature type="domain" description="LRRCT">
    <location>
        <begin position="187"/>
        <end position="237"/>
    </location>
</feature>
<feature type="domain" description="Ig-like">
    <location>
        <begin position="242"/>
        <end position="340"/>
    </location>
</feature>
<feature type="domain" description="GAIN-B" evidence="3">
    <location>
        <begin position="583"/>
        <end position="750"/>
    </location>
</feature>
<feature type="repeat" description="LRR 5">
    <location>
        <begin position="594"/>
        <end position="620"/>
    </location>
</feature>
<feature type="region of interest" description="GPS" evidence="3">
    <location>
        <begin position="701"/>
        <end position="750"/>
    </location>
</feature>
<feature type="region of interest" description="Disordered" evidence="5">
    <location>
        <begin position="1073"/>
        <end position="1094"/>
    </location>
</feature>
<feature type="region of interest" description="Disordered" evidence="5">
    <location>
        <begin position="1198"/>
        <end position="1219"/>
    </location>
</feature>
<feature type="region of interest" description="Disordered" evidence="5">
    <location>
        <begin position="1231"/>
        <end position="1265"/>
    </location>
</feature>
<feature type="region of interest" description="Disordered" evidence="5">
    <location>
        <begin position="1294"/>
        <end position="1321"/>
    </location>
</feature>
<feature type="short sequence motif" description="PDZ-binding" evidence="2">
    <location>
        <begin position="1319"/>
        <end position="1321"/>
    </location>
</feature>
<feature type="compositionally biased region" description="Polar residues" evidence="5">
    <location>
        <begin position="1073"/>
        <end position="1083"/>
    </location>
</feature>
<feature type="compositionally biased region" description="Polar residues" evidence="5">
    <location>
        <begin position="1233"/>
        <end position="1250"/>
    </location>
</feature>
<feature type="glycosylation site" description="N-linked (GlcNAc...) asparagine" evidence="2">
    <location>
        <position position="81"/>
    </location>
</feature>
<feature type="glycosylation site" description="N-linked (GlcNAc...) asparagine" evidence="2">
    <location>
        <position position="98"/>
    </location>
</feature>
<feature type="glycosylation site" description="N-linked (GlcNAc...) asparagine" evidence="2">
    <location>
        <position position="159"/>
    </location>
</feature>
<feature type="glycosylation site" description="N-linked (GlcNAc...) asparagine" evidence="2">
    <location>
        <position position="206"/>
    </location>
</feature>
<feature type="glycosylation site" description="N-linked (GlcNAc...) asparagine" evidence="2">
    <location>
        <position position="301"/>
    </location>
</feature>
<feature type="glycosylation site" description="N-linked (GlcNAc...) asparagine" evidence="2">
    <location>
        <position position="332"/>
    </location>
</feature>
<feature type="glycosylation site" description="N-linked (GlcNAc...) asparagine" evidence="2">
    <location>
        <position position="433"/>
    </location>
</feature>
<feature type="glycosylation site" description="N-linked (GlcNAc...) asparagine" evidence="2">
    <location>
        <position position="453"/>
    </location>
</feature>
<feature type="glycosylation site" description="N-linked (GlcNAc...) asparagine" evidence="2">
    <location>
        <position position="592"/>
    </location>
</feature>
<feature type="glycosylation site" description="N-linked (GlcNAc...) asparagine" evidence="2">
    <location>
        <position position="652"/>
    </location>
</feature>
<feature type="glycosylation site" description="N-linked (GlcNAc...) asparagine" evidence="2">
    <location>
        <position position="687"/>
    </location>
</feature>
<feature type="glycosylation site" description="N-linked (GlcNAc...) asparagine" evidence="2">
    <location>
        <position position="728"/>
    </location>
</feature>
<feature type="glycosylation site" description="N-linked (GlcNAc...) asparagine" evidence="2">
    <location>
        <position position="821"/>
    </location>
</feature>
<feature type="disulfide bond" evidence="4">
    <location>
        <begin position="264"/>
        <end position="324"/>
    </location>
</feature>
<feature type="disulfide bond" evidence="3">
    <location>
        <begin position="720"/>
        <end position="734"/>
    </location>
</feature>
<feature type="splice variant" id="VSP_010738" description="In isoform 3." evidence="7">
    <original>MEPPGRRRGRAQPPLLLPLSLLALLALLGGGGGGGAAALPAGCKHDGRPRGAGRAAGAAEGKVVCSSLELAQVLPPDTLPNRTVTLILSNNKISELKNGSFSGLSLLERLDLRNNLISSIDPGAFWGLSSLKRL</original>
    <variation>MMRVMPCQV</variation>
    <location>
        <begin position="1"/>
        <end position="134"/>
    </location>
</feature>
<feature type="splice variant" id="VSP_010743" description="In isoform 4." evidence="9">
    <original>MEPPGRRRGR</original>
    <variation>MPLKRNNSKY</variation>
    <location>
        <begin position="1"/>
        <end position="10"/>
    </location>
</feature>
<feature type="splice variant" id="VSP_010744" description="In isoform 4." evidence="9">
    <location>
        <begin position="11"/>
        <end position="236"/>
    </location>
</feature>
<feature type="splice variant" id="VSP_010740" description="In isoform 3." evidence="7">
    <location>
        <begin position="603"/>
        <end position="620"/>
    </location>
</feature>
<feature type="splice variant" id="VSP_010741" description="In isoform 2." evidence="8">
    <original>NTIVEASIQLPPS</original>
    <variation>VCYILQSFKTIYS</variation>
    <location>
        <begin position="604"/>
        <end position="616"/>
    </location>
</feature>
<feature type="splice variant" id="VSP_010745" description="In isoform 4." evidence="9">
    <original>NTIV</original>
    <variation>GKFR</variation>
    <location>
        <begin position="604"/>
        <end position="607"/>
    </location>
</feature>
<feature type="splice variant" id="VSP_010746" description="In isoform 4." evidence="9">
    <location>
        <begin position="608"/>
        <end position="1321"/>
    </location>
</feature>
<feature type="splice variant" id="VSP_010742" description="In isoform 2." evidence="8">
    <location>
        <begin position="617"/>
        <end position="1321"/>
    </location>
</feature>
<feature type="sequence variant" id="VAR_033971" description="In dbSNP:rs9002.">
    <original>V</original>
    <variation>M</variation>
    <location>
        <position position="1043"/>
    </location>
</feature>
<feature type="sequence variant" id="VAR_033972" description="In dbSNP:rs3814416.">
    <original>V</original>
    <variation>G</variation>
    <location>
        <position position="1166"/>
    </location>
</feature>
<feature type="sequence conflict" description="In Ref. 4; BC026009." evidence="11" ref="4">
    <original>S</original>
    <variation>P</variation>
    <location>
        <position position="537"/>
    </location>
</feature>
<accession>Q8IWK6</accession>
<accession>Q6UXK9</accession>
<accession>Q86SQ5</accession>
<accession>Q8TC55</accession>
<comment type="function">
    <text evidence="1">Orphan receptor that may have a role in planar cell polarity pathway.</text>
</comment>
<comment type="subunit">
    <text evidence="6">Interacts (via PDZ-binding motif) with DLG1.</text>
</comment>
<comment type="interaction">
    <interactant intactId="EBI-10949249">
        <id>Q8IWK6-3</id>
    </interactant>
    <interactant intactId="EBI-357500">
        <id>Q12959-2</id>
        <label>DLG1</label>
    </interactant>
    <organismsDiffer>false</organismsDiffer>
    <experiments>2</experiments>
</comment>
<comment type="subcellular location">
    <subcellularLocation>
        <location evidence="1">Membrane</location>
        <topology evidence="2">Multi-pass membrane protein</topology>
    </subcellularLocation>
</comment>
<comment type="alternative products">
    <event type="alternative splicing"/>
    <isoform>
        <id>Q8IWK6-1</id>
        <name>1</name>
        <sequence type="displayed"/>
    </isoform>
    <isoform>
        <id>Q8IWK6-2</id>
        <name>2</name>
        <sequence type="described" ref="VSP_010741 VSP_010742"/>
    </isoform>
    <isoform>
        <id>Q8IWK6-3</id>
        <name>3</name>
        <sequence type="described" ref="VSP_010738 VSP_010740"/>
    </isoform>
    <isoform>
        <id>Q8IWK6-4</id>
        <name>4</name>
        <sequence type="described" ref="VSP_010743 VSP_010744 VSP_010745 VSP_010746"/>
    </isoform>
</comment>
<comment type="miscellaneous">
    <text evidence="11">Most adhesion GPCRs proteins undergo autoproteolysis at the GPS region of the GAIN-B domain. ADGRA3 is predicted non-cleavable because of the lack of a consensus catalytic triad sequence within GPS region.</text>
</comment>
<comment type="similarity">
    <text evidence="11">Belongs to the G-protein coupled receptor 2 family. Adhesion G-protein coupled receptor (ADGR) subfamily.</text>
</comment>
<comment type="sequence caution" evidence="11">
    <conflict type="miscellaneous discrepancy">
        <sequence resource="EMBL-CDS" id="AAH35645"/>
    </conflict>
    <text>Contaminating sequence. Potential poly-A sequence.</text>
</comment>
<evidence type="ECO:0000250" key="1">
    <source>
        <dbReference type="UniProtKB" id="S4X0Q8"/>
    </source>
</evidence>
<evidence type="ECO:0000255" key="2"/>
<evidence type="ECO:0000255" key="3">
    <source>
        <dbReference type="PROSITE-ProRule" id="PRU00098"/>
    </source>
</evidence>
<evidence type="ECO:0000255" key="4">
    <source>
        <dbReference type="PROSITE-ProRule" id="PRU00114"/>
    </source>
</evidence>
<evidence type="ECO:0000256" key="5">
    <source>
        <dbReference type="SAM" id="MobiDB-lite"/>
    </source>
</evidence>
<evidence type="ECO:0000269" key="6">
    <source>
    </source>
</evidence>
<evidence type="ECO:0000303" key="7">
    <source>
    </source>
</evidence>
<evidence type="ECO:0000303" key="8">
    <source>
    </source>
</evidence>
<evidence type="ECO:0000303" key="9">
    <source>
    </source>
</evidence>
<evidence type="ECO:0000303" key="10">
    <source>
    </source>
</evidence>
<evidence type="ECO:0000305" key="11"/>
<evidence type="ECO:0000312" key="12">
    <source>
        <dbReference type="HGNC" id="HGNC:13839"/>
    </source>
</evidence>
<dbReference type="EMBL" id="AY181243">
    <property type="protein sequence ID" value="AAO27355.1"/>
    <property type="molecule type" value="mRNA"/>
</dbReference>
<dbReference type="EMBL" id="AY358306">
    <property type="protein sequence ID" value="AAQ88673.1"/>
    <property type="molecule type" value="mRNA"/>
</dbReference>
<dbReference type="EMBL" id="AC093735">
    <property type="status" value="NOT_ANNOTATED_CDS"/>
    <property type="molecule type" value="Genomic_DNA"/>
</dbReference>
<dbReference type="EMBL" id="AC093814">
    <property type="status" value="NOT_ANNOTATED_CDS"/>
    <property type="molecule type" value="Genomic_DNA"/>
</dbReference>
<dbReference type="EMBL" id="BC026009">
    <property type="status" value="NOT_ANNOTATED_CDS"/>
    <property type="molecule type" value="mRNA"/>
</dbReference>
<dbReference type="EMBL" id="BC035645">
    <property type="protein sequence ID" value="AAH35645.1"/>
    <property type="status" value="ALT_SEQ"/>
    <property type="molecule type" value="mRNA"/>
</dbReference>
<dbReference type="CCDS" id="CCDS33964.1">
    <molecule id="Q8IWK6-1"/>
</dbReference>
<dbReference type="RefSeq" id="NP_660333.2">
    <molecule id="Q8IWK6-1"/>
    <property type="nucleotide sequence ID" value="NM_145290.3"/>
</dbReference>
<dbReference type="SMR" id="Q8IWK6"/>
<dbReference type="BioGRID" id="127930">
    <property type="interactions" value="32"/>
</dbReference>
<dbReference type="FunCoup" id="Q8IWK6">
    <property type="interactions" value="790"/>
</dbReference>
<dbReference type="IntAct" id="Q8IWK6">
    <property type="interactions" value="15"/>
</dbReference>
<dbReference type="MINT" id="Q8IWK6"/>
<dbReference type="STRING" id="9606.ENSP00000334952"/>
<dbReference type="ChEMBL" id="CHEMBL4523887"/>
<dbReference type="MEROPS" id="P02.018"/>
<dbReference type="GlyCosmos" id="Q8IWK6">
    <property type="glycosylation" value="13 sites, No reported glycans"/>
</dbReference>
<dbReference type="GlyGen" id="Q8IWK6">
    <property type="glycosylation" value="13 sites, 6 N-linked glycans (7 sites)"/>
</dbReference>
<dbReference type="iPTMnet" id="Q8IWK6"/>
<dbReference type="PhosphoSitePlus" id="Q8IWK6"/>
<dbReference type="SwissPalm" id="Q8IWK6"/>
<dbReference type="BioMuta" id="ADGRA3"/>
<dbReference type="DMDM" id="50400542"/>
<dbReference type="jPOST" id="Q8IWK6"/>
<dbReference type="MassIVE" id="Q8IWK6"/>
<dbReference type="PaxDb" id="9606-ENSP00000334952"/>
<dbReference type="PeptideAtlas" id="Q8IWK6"/>
<dbReference type="ProteomicsDB" id="70864">
    <molecule id="Q8IWK6-1"/>
</dbReference>
<dbReference type="ProteomicsDB" id="70865">
    <molecule id="Q8IWK6-2"/>
</dbReference>
<dbReference type="ProteomicsDB" id="70866">
    <molecule id="Q8IWK6-3"/>
</dbReference>
<dbReference type="ProteomicsDB" id="70867">
    <molecule id="Q8IWK6-4"/>
</dbReference>
<dbReference type="Antibodypedia" id="1933">
    <property type="antibodies" value="157 antibodies from 30 providers"/>
</dbReference>
<dbReference type="DNASU" id="166647"/>
<dbReference type="Ensembl" id="ENST00000334304.10">
    <molecule id="Q8IWK6-1"/>
    <property type="protein sequence ID" value="ENSP00000334952.5"/>
    <property type="gene ID" value="ENSG00000152990.14"/>
</dbReference>
<dbReference type="Ensembl" id="ENST00000502482.1">
    <molecule id="Q8IWK6-2"/>
    <property type="protein sequence ID" value="ENSP00000421006.1"/>
    <property type="gene ID" value="ENSG00000152990.14"/>
</dbReference>
<dbReference type="Ensembl" id="ENST00000508133.5">
    <molecule id="Q8IWK6-4"/>
    <property type="protein sequence ID" value="ENSP00000422606.1"/>
    <property type="gene ID" value="ENSG00000152990.14"/>
</dbReference>
<dbReference type="GeneID" id="166647"/>
<dbReference type="KEGG" id="hsa:166647"/>
<dbReference type="MANE-Select" id="ENST00000334304.10">
    <property type="protein sequence ID" value="ENSP00000334952.5"/>
    <property type="RefSeq nucleotide sequence ID" value="NM_145290.4"/>
    <property type="RefSeq protein sequence ID" value="NP_660333.2"/>
</dbReference>
<dbReference type="UCSC" id="uc003gqm.3">
    <molecule id="Q8IWK6-1"/>
    <property type="organism name" value="human"/>
</dbReference>
<dbReference type="AGR" id="HGNC:13839"/>
<dbReference type="CTD" id="166647"/>
<dbReference type="DisGeNET" id="166647"/>
<dbReference type="GeneCards" id="ADGRA3"/>
<dbReference type="HGNC" id="HGNC:13839">
    <property type="gene designation" value="ADGRA3"/>
</dbReference>
<dbReference type="HPA" id="ENSG00000152990">
    <property type="expression patterns" value="Tissue enhanced (liver)"/>
</dbReference>
<dbReference type="MalaCards" id="ADGRA3"/>
<dbReference type="MIM" id="612303">
    <property type="type" value="gene"/>
</dbReference>
<dbReference type="neXtProt" id="NX_Q8IWK6"/>
<dbReference type="OpenTargets" id="ENSG00000152990"/>
<dbReference type="PharmGKB" id="PA134919579"/>
<dbReference type="VEuPathDB" id="HostDB:ENSG00000152990"/>
<dbReference type="eggNOG" id="KOG0619">
    <property type="taxonomic scope" value="Eukaryota"/>
</dbReference>
<dbReference type="eggNOG" id="KOG4237">
    <property type="taxonomic scope" value="Eukaryota"/>
</dbReference>
<dbReference type="GeneTree" id="ENSGT00940000157235"/>
<dbReference type="HOGENOM" id="CLU_005242_1_0_1"/>
<dbReference type="InParanoid" id="Q8IWK6"/>
<dbReference type="OMA" id="CQQHYQH"/>
<dbReference type="OrthoDB" id="10031018at2759"/>
<dbReference type="PAN-GO" id="Q8IWK6">
    <property type="GO annotations" value="3 GO annotations based on evolutionary models"/>
</dbReference>
<dbReference type="PhylomeDB" id="Q8IWK6"/>
<dbReference type="TreeFam" id="TF331206"/>
<dbReference type="PathwayCommons" id="Q8IWK6"/>
<dbReference type="SignaLink" id="Q8IWK6"/>
<dbReference type="BioGRID-ORCS" id="166647">
    <property type="hits" value="7 hits in 1154 CRISPR screens"/>
</dbReference>
<dbReference type="ChiTaRS" id="ADGRA3">
    <property type="organism name" value="human"/>
</dbReference>
<dbReference type="GeneWiki" id="GPR125"/>
<dbReference type="GenomeRNAi" id="166647"/>
<dbReference type="Pharos" id="Q8IWK6">
    <property type="development level" value="Tbio"/>
</dbReference>
<dbReference type="PRO" id="PR:Q8IWK6"/>
<dbReference type="Proteomes" id="UP000005640">
    <property type="component" value="Chromosome 4"/>
</dbReference>
<dbReference type="RNAct" id="Q8IWK6">
    <property type="molecule type" value="protein"/>
</dbReference>
<dbReference type="Bgee" id="ENSG00000152990">
    <property type="expression patterns" value="Expressed in ventricular zone and 184 other cell types or tissues"/>
</dbReference>
<dbReference type="ExpressionAtlas" id="Q8IWK6">
    <property type="expression patterns" value="baseline and differential"/>
</dbReference>
<dbReference type="GO" id="GO:0009897">
    <property type="term" value="C:external side of plasma membrane"/>
    <property type="evidence" value="ECO:0000318"/>
    <property type="project" value="GO_Central"/>
</dbReference>
<dbReference type="GO" id="GO:0016020">
    <property type="term" value="C:membrane"/>
    <property type="evidence" value="ECO:0000304"/>
    <property type="project" value="GDB"/>
</dbReference>
<dbReference type="GO" id="GO:0005886">
    <property type="term" value="C:plasma membrane"/>
    <property type="evidence" value="ECO:0000318"/>
    <property type="project" value="GO_Central"/>
</dbReference>
<dbReference type="GO" id="GO:0004930">
    <property type="term" value="F:G protein-coupled receptor activity"/>
    <property type="evidence" value="ECO:0000304"/>
    <property type="project" value="GDB"/>
</dbReference>
<dbReference type="GO" id="GO:0007166">
    <property type="term" value="P:cell surface receptor signaling pathway"/>
    <property type="evidence" value="ECO:0000318"/>
    <property type="project" value="GO_Central"/>
</dbReference>
<dbReference type="GO" id="GO:0007186">
    <property type="term" value="P:G protein-coupled receptor signaling pathway"/>
    <property type="evidence" value="ECO:0000304"/>
    <property type="project" value="GDB"/>
</dbReference>
<dbReference type="FunFam" id="2.60.40.10:FF:000445">
    <property type="entry name" value="Adhesion G protein-coupled receptor A3"/>
    <property type="match status" value="1"/>
</dbReference>
<dbReference type="FunFam" id="2.60.220.50:FF:000011">
    <property type="entry name" value="adhesion G protein-coupled receptor A3"/>
    <property type="match status" value="1"/>
</dbReference>
<dbReference type="FunFam" id="3.80.10.10:FF:000287">
    <property type="entry name" value="adhesion G protein-coupled receptor A3"/>
    <property type="match status" value="1"/>
</dbReference>
<dbReference type="Gene3D" id="2.60.220.50">
    <property type="match status" value="1"/>
</dbReference>
<dbReference type="Gene3D" id="4.10.1240.10">
    <property type="entry name" value="GPCR, family 2, extracellular hormone receptor domain"/>
    <property type="match status" value="1"/>
</dbReference>
<dbReference type="Gene3D" id="2.60.40.10">
    <property type="entry name" value="Immunoglobulins"/>
    <property type="match status" value="1"/>
</dbReference>
<dbReference type="Gene3D" id="1.20.1070.10">
    <property type="entry name" value="Rhodopsin 7-helix transmembrane proteins"/>
    <property type="match status" value="1"/>
</dbReference>
<dbReference type="Gene3D" id="3.80.10.10">
    <property type="entry name" value="Ribonuclease Inhibitor"/>
    <property type="match status" value="1"/>
</dbReference>
<dbReference type="InterPro" id="IPR051963">
    <property type="entry name" value="Adhesion_GPCR_A"/>
</dbReference>
<dbReference type="InterPro" id="IPR000483">
    <property type="entry name" value="Cys-rich_flank_reg_C"/>
</dbReference>
<dbReference type="InterPro" id="IPR057244">
    <property type="entry name" value="GAIN_B"/>
</dbReference>
<dbReference type="InterPro" id="IPR046338">
    <property type="entry name" value="GAIN_dom_sf"/>
</dbReference>
<dbReference type="InterPro" id="IPR017981">
    <property type="entry name" value="GPCR_2-like_7TM"/>
</dbReference>
<dbReference type="InterPro" id="IPR036445">
    <property type="entry name" value="GPCR_2_extracell_dom_sf"/>
</dbReference>
<dbReference type="InterPro" id="IPR001879">
    <property type="entry name" value="GPCR_2_extracellular_dom"/>
</dbReference>
<dbReference type="InterPro" id="IPR000832">
    <property type="entry name" value="GPCR_2_secretin-like"/>
</dbReference>
<dbReference type="InterPro" id="IPR000203">
    <property type="entry name" value="GPS"/>
</dbReference>
<dbReference type="InterPro" id="IPR007110">
    <property type="entry name" value="Ig-like_dom"/>
</dbReference>
<dbReference type="InterPro" id="IPR036179">
    <property type="entry name" value="Ig-like_dom_sf"/>
</dbReference>
<dbReference type="InterPro" id="IPR013783">
    <property type="entry name" value="Ig-like_fold"/>
</dbReference>
<dbReference type="InterPro" id="IPR013098">
    <property type="entry name" value="Ig_I-set"/>
</dbReference>
<dbReference type="InterPro" id="IPR003599">
    <property type="entry name" value="Ig_sub"/>
</dbReference>
<dbReference type="InterPro" id="IPR001611">
    <property type="entry name" value="Leu-rich_rpt"/>
</dbReference>
<dbReference type="InterPro" id="IPR003591">
    <property type="entry name" value="Leu-rich_rpt_typical-subtyp"/>
</dbReference>
<dbReference type="InterPro" id="IPR032675">
    <property type="entry name" value="LRR_dom_sf"/>
</dbReference>
<dbReference type="PANTHER" id="PTHR45930:SF2">
    <property type="entry name" value="ADHESION G PROTEIN-COUPLED RECEPTOR A3"/>
    <property type="match status" value="1"/>
</dbReference>
<dbReference type="PANTHER" id="PTHR45930">
    <property type="entry name" value="G-PROTEIN COUPLED RECEPTOR 124-LIKE PROTEIN"/>
    <property type="match status" value="1"/>
</dbReference>
<dbReference type="Pfam" id="PF00002">
    <property type="entry name" value="7tm_2"/>
    <property type="match status" value="1"/>
</dbReference>
<dbReference type="Pfam" id="PF01825">
    <property type="entry name" value="GPS"/>
    <property type="match status" value="1"/>
</dbReference>
<dbReference type="Pfam" id="PF07679">
    <property type="entry name" value="I-set"/>
    <property type="match status" value="1"/>
</dbReference>
<dbReference type="Pfam" id="PF13855">
    <property type="entry name" value="LRR_8"/>
    <property type="match status" value="1"/>
</dbReference>
<dbReference type="SMART" id="SM00303">
    <property type="entry name" value="GPS"/>
    <property type="match status" value="1"/>
</dbReference>
<dbReference type="SMART" id="SM00409">
    <property type="entry name" value="IG"/>
    <property type="match status" value="1"/>
</dbReference>
<dbReference type="SMART" id="SM00369">
    <property type="entry name" value="LRR_TYP"/>
    <property type="match status" value="4"/>
</dbReference>
<dbReference type="SMART" id="SM00082">
    <property type="entry name" value="LRRCT"/>
    <property type="match status" value="1"/>
</dbReference>
<dbReference type="SUPFAM" id="SSF111418">
    <property type="entry name" value="Hormone receptor domain"/>
    <property type="match status" value="1"/>
</dbReference>
<dbReference type="SUPFAM" id="SSF48726">
    <property type="entry name" value="Immunoglobulin"/>
    <property type="match status" value="1"/>
</dbReference>
<dbReference type="SUPFAM" id="SSF52058">
    <property type="entry name" value="L domain-like"/>
    <property type="match status" value="1"/>
</dbReference>
<dbReference type="PROSITE" id="PS50227">
    <property type="entry name" value="G_PROTEIN_RECEP_F2_3"/>
    <property type="match status" value="1"/>
</dbReference>
<dbReference type="PROSITE" id="PS50261">
    <property type="entry name" value="G_PROTEIN_RECEP_F2_4"/>
    <property type="match status" value="1"/>
</dbReference>
<dbReference type="PROSITE" id="PS50221">
    <property type="entry name" value="GAIN_B"/>
    <property type="match status" value="1"/>
</dbReference>
<dbReference type="PROSITE" id="PS50835">
    <property type="entry name" value="IG_LIKE"/>
    <property type="match status" value="1"/>
</dbReference>
<dbReference type="PROSITE" id="PS51450">
    <property type="entry name" value="LRR"/>
    <property type="match status" value="4"/>
</dbReference>
<sequence length="1321" mass="146151">MEPPGRRRGRAQPPLLLPLSLLALLALLGGGGGGGAAALPAGCKHDGRPRGAGRAAGAAEGKVVCSSLELAQVLPPDTLPNRTVTLILSNNKISELKNGSFSGLSLLERLDLRNNLISSIDPGAFWGLSSLKRLDLTNNRIGCLNADIFRGLTNLVRLNLSGNLFSSLSQGTFDYLASLRSLEFQTEYLLCDCNILWMHRWVKEKNITVRDTRCVYPKSLQAQPVTGVKQELLTCDPPLELPSFYMTPSHRQVVFEGDSLPFQCMASYIDQDMQVLWYQDGRIVETDESQGIFVEKNMIHNCSLIASALTISNIQAGSTGNWGCHVQTKRGNNTRTVDIVVLESSAQYCPPERVVNNKGDFRWPRTLAGITAYLQCTRNTHGSGIYPGNPQDERKAWRRCDRGGFWADDDYSRCQYANDVTRVLYMFNQMPLNLTNAVATARQLLAYTVEAANFSDKMDVIFVAEMIEKFGRFTKEEKSKELGDVMVDIASNIMLADERVLWLAQREAKACSRIVQCLQRIATYRLAGGAHVYSTYSPNIALEAYVIKSTGFTGMTCTVFQKVAASDRTGLSDYGRRDPEGNLDKQLSFKCNVSNTFSSLALKNTIVEASIQLPPSLFSPKQKRELRPTDDSLYKLQLIAFRNGKLFPATGNSTNLADDGKRRTVVTPVILTKIDGVNVDTHHIPVNVTLRRIAHGADAVAARWDFDLLNGQGGWKSDGCHILYSDENITTIQCYSLSNYAVLMDLTGSELYTQAASLLHPVVYTTAIILLLCLLAVIVSYIYHHSLIRISLKSWHMLVNLCFHIFLTCVVFVGGITQTRNASICQAVGIILHYSTLATVLWVGVTARNIYKQVTKKAKRCQDPDEPPPPPRPMLRFYLIGGGIPIIVCGITAAANIKNYGSRPNAPYCWMAWEPSLGAFYGPASFITFVNCMYFLSIFIQLKRHPERKYELKEPTEEQQRLAANENGEINHQDSMSLSLISTSALENEHTFHSQLLGASLTLLLYVALWMFGALAVSLYYPLDLVFSFVFGATSLSFSAFFVVHHCVNREDVRLAWIMTCCPGRSSYSVQVNVQPPNSNGTNGEAPKCPNSSAESSCTNKSASSFKNSSQGCKLTNLQAAAAQCHANSLPLNSTPQLDNSLTEHSMDNDIKMHVAPLEVQFRTNVHSSRHHKNRSKGHRASRLTVLREYAYDVPTSVEGSVQNGLPKSRLGNNEGHSRSRRAYLAYRERQYNPPQQDSSDACSTLPKSSRNFEKPVSTTSKKDALRKPAVVELENQQKSYGLNLAIQNGPIKSNGQEGPLLGTDSTGNVRTGLWKHETTV</sequence>
<organism>
    <name type="scientific">Homo sapiens</name>
    <name type="common">Human</name>
    <dbReference type="NCBI Taxonomy" id="9606"/>
    <lineage>
        <taxon>Eukaryota</taxon>
        <taxon>Metazoa</taxon>
        <taxon>Chordata</taxon>
        <taxon>Craniata</taxon>
        <taxon>Vertebrata</taxon>
        <taxon>Euteleostomi</taxon>
        <taxon>Mammalia</taxon>
        <taxon>Eutheria</taxon>
        <taxon>Euarchontoglires</taxon>
        <taxon>Primates</taxon>
        <taxon>Haplorrhini</taxon>
        <taxon>Catarrhini</taxon>
        <taxon>Hominidae</taxon>
        <taxon>Homo</taxon>
    </lineage>
</organism>
<proteinExistence type="evidence at protein level"/>
<gene>
    <name evidence="12" type="primary">ADGRA3</name>
    <name type="synonym">GPR125</name>
    <name type="ORF">UNQ556/PRO1113</name>
</gene>
<name>AGRA3_HUMAN</name>
<protein>
    <recommendedName>
        <fullName evidence="10">Adhesion G protein-coupled receptor A3</fullName>
    </recommendedName>
    <alternativeName>
        <fullName>G-protein coupled receptor 125</fullName>
    </alternativeName>
</protein>
<reference key="1">
    <citation type="journal article" date="2003" name="Biochem. Biophys. Res. Commun.">
        <title>There exist at least 30 human G-protein-coupled receptors with long Ser/Thr-rich N-termini.</title>
        <authorList>
            <person name="Fredriksson R."/>
            <person name="Gloriam D.E.I."/>
            <person name="Hoeglund P.J."/>
            <person name="Lagerstroem M.C."/>
            <person name="Schioeth H.B."/>
        </authorList>
    </citation>
    <scope>NUCLEOTIDE SEQUENCE [MRNA] (ISOFORM 3)</scope>
</reference>
<reference key="2">
    <citation type="journal article" date="2003" name="Genome Res.">
        <title>The secreted protein discovery initiative (SPDI), a large-scale effort to identify novel human secreted and transmembrane proteins: a bioinformatics assessment.</title>
        <authorList>
            <person name="Clark H.F."/>
            <person name="Gurney A.L."/>
            <person name="Abaya E."/>
            <person name="Baker K."/>
            <person name="Baldwin D.T."/>
            <person name="Brush J."/>
            <person name="Chen J."/>
            <person name="Chow B."/>
            <person name="Chui C."/>
            <person name="Crowley C."/>
            <person name="Currell B."/>
            <person name="Deuel B."/>
            <person name="Dowd P."/>
            <person name="Eaton D."/>
            <person name="Foster J.S."/>
            <person name="Grimaldi C."/>
            <person name="Gu Q."/>
            <person name="Hass P.E."/>
            <person name="Heldens S."/>
            <person name="Huang A."/>
            <person name="Kim H.S."/>
            <person name="Klimowski L."/>
            <person name="Jin Y."/>
            <person name="Johnson S."/>
            <person name="Lee J."/>
            <person name="Lewis L."/>
            <person name="Liao D."/>
            <person name="Mark M.R."/>
            <person name="Robbie E."/>
            <person name="Sanchez C."/>
            <person name="Schoenfeld J."/>
            <person name="Seshagiri S."/>
            <person name="Simmons L."/>
            <person name="Singh J."/>
            <person name="Smith V."/>
            <person name="Stinson J."/>
            <person name="Vagts A."/>
            <person name="Vandlen R.L."/>
            <person name="Watanabe C."/>
            <person name="Wieand D."/>
            <person name="Woods K."/>
            <person name="Xie M.-H."/>
            <person name="Yansura D.G."/>
            <person name="Yi S."/>
            <person name="Yu G."/>
            <person name="Yuan J."/>
            <person name="Zhang M."/>
            <person name="Zhang Z."/>
            <person name="Goddard A.D."/>
            <person name="Wood W.I."/>
            <person name="Godowski P.J."/>
            <person name="Gray A.M."/>
        </authorList>
    </citation>
    <scope>NUCLEOTIDE SEQUENCE [LARGE SCALE MRNA] (ISOFORM 2)</scope>
</reference>
<reference key="3">
    <citation type="journal article" date="2005" name="Nature">
        <title>Generation and annotation of the DNA sequences of human chromosomes 2 and 4.</title>
        <authorList>
            <person name="Hillier L.W."/>
            <person name="Graves T.A."/>
            <person name="Fulton R.S."/>
            <person name="Fulton L.A."/>
            <person name="Pepin K.H."/>
            <person name="Minx P."/>
            <person name="Wagner-McPherson C."/>
            <person name="Layman D."/>
            <person name="Wylie K."/>
            <person name="Sekhon M."/>
            <person name="Becker M.C."/>
            <person name="Fewell G.A."/>
            <person name="Delehaunty K.D."/>
            <person name="Miner T.L."/>
            <person name="Nash W.E."/>
            <person name="Kremitzki C."/>
            <person name="Oddy L."/>
            <person name="Du H."/>
            <person name="Sun H."/>
            <person name="Bradshaw-Cordum H."/>
            <person name="Ali J."/>
            <person name="Carter J."/>
            <person name="Cordes M."/>
            <person name="Harris A."/>
            <person name="Isak A."/>
            <person name="van Brunt A."/>
            <person name="Nguyen C."/>
            <person name="Du F."/>
            <person name="Courtney L."/>
            <person name="Kalicki J."/>
            <person name="Ozersky P."/>
            <person name="Abbott S."/>
            <person name="Armstrong J."/>
            <person name="Belter E.A."/>
            <person name="Caruso L."/>
            <person name="Cedroni M."/>
            <person name="Cotton M."/>
            <person name="Davidson T."/>
            <person name="Desai A."/>
            <person name="Elliott G."/>
            <person name="Erb T."/>
            <person name="Fronick C."/>
            <person name="Gaige T."/>
            <person name="Haakenson W."/>
            <person name="Haglund K."/>
            <person name="Holmes A."/>
            <person name="Harkins R."/>
            <person name="Kim K."/>
            <person name="Kruchowski S.S."/>
            <person name="Strong C.M."/>
            <person name="Grewal N."/>
            <person name="Goyea E."/>
            <person name="Hou S."/>
            <person name="Levy A."/>
            <person name="Martinka S."/>
            <person name="Mead K."/>
            <person name="McLellan M.D."/>
            <person name="Meyer R."/>
            <person name="Randall-Maher J."/>
            <person name="Tomlinson C."/>
            <person name="Dauphin-Kohlberg S."/>
            <person name="Kozlowicz-Reilly A."/>
            <person name="Shah N."/>
            <person name="Swearengen-Shahid S."/>
            <person name="Snider J."/>
            <person name="Strong J.T."/>
            <person name="Thompson J."/>
            <person name="Yoakum M."/>
            <person name="Leonard S."/>
            <person name="Pearman C."/>
            <person name="Trani L."/>
            <person name="Radionenko M."/>
            <person name="Waligorski J.E."/>
            <person name="Wang C."/>
            <person name="Rock S.M."/>
            <person name="Tin-Wollam A.-M."/>
            <person name="Maupin R."/>
            <person name="Latreille P."/>
            <person name="Wendl M.C."/>
            <person name="Yang S.-P."/>
            <person name="Pohl C."/>
            <person name="Wallis J.W."/>
            <person name="Spieth J."/>
            <person name="Bieri T.A."/>
            <person name="Berkowicz N."/>
            <person name="Nelson J.O."/>
            <person name="Osborne J."/>
            <person name="Ding L."/>
            <person name="Meyer R."/>
            <person name="Sabo A."/>
            <person name="Shotland Y."/>
            <person name="Sinha P."/>
            <person name="Wohldmann P.E."/>
            <person name="Cook L.L."/>
            <person name="Hickenbotham M.T."/>
            <person name="Eldred J."/>
            <person name="Williams D."/>
            <person name="Jones T.A."/>
            <person name="She X."/>
            <person name="Ciccarelli F.D."/>
            <person name="Izaurralde E."/>
            <person name="Taylor J."/>
            <person name="Schmutz J."/>
            <person name="Myers R.M."/>
            <person name="Cox D.R."/>
            <person name="Huang X."/>
            <person name="McPherson J.D."/>
            <person name="Mardis E.R."/>
            <person name="Clifton S.W."/>
            <person name="Warren W.C."/>
            <person name="Chinwalla A.T."/>
            <person name="Eddy S.R."/>
            <person name="Marra M.A."/>
            <person name="Ovcharenko I."/>
            <person name="Furey T.S."/>
            <person name="Miller W."/>
            <person name="Eichler E.E."/>
            <person name="Bork P."/>
            <person name="Suyama M."/>
            <person name="Torrents D."/>
            <person name="Waterston R.H."/>
            <person name="Wilson R.K."/>
        </authorList>
    </citation>
    <scope>NUCLEOTIDE SEQUENCE [LARGE SCALE GENOMIC DNA]</scope>
</reference>
<reference key="4">
    <citation type="journal article" date="2004" name="Genome Res.">
        <title>The status, quality, and expansion of the NIH full-length cDNA project: the Mammalian Gene Collection (MGC).</title>
        <authorList>
            <consortium name="The MGC Project Team"/>
        </authorList>
    </citation>
    <scope>NUCLEOTIDE SEQUENCE [LARGE SCALE MRNA] (ISOFORMS 1 AND 4)</scope>
    <source>
        <tissue>Eye</tissue>
        <tissue>Liver</tissue>
    </source>
</reference>
<reference key="5">
    <citation type="journal article" date="2004" name="Oncogene">
        <title>Direct binding of the human homologue of the Drosophila disc large tumor suppressor gene to seven-pass transmembrane proteins, tumor endothelial marker 5 (TEM5), and a novel TEM5-like protein.</title>
        <authorList>
            <person name="Yamamoto Y."/>
            <person name="Irie K."/>
            <person name="Asada M."/>
            <person name="Mino A."/>
            <person name="Mandai K."/>
            <person name="Takai Y."/>
        </authorList>
    </citation>
    <scope>INTERACTION WITH DLG1</scope>
</reference>
<reference key="6">
    <citation type="journal article" date="2015" name="Pharmacol. Rev.">
        <title>International union of basic and clinical pharmacology. XCIV. Adhesion G protein-coupled receptors.</title>
        <authorList>
            <person name="Hamann J."/>
            <person name="Aust G."/>
            <person name="Arac D."/>
            <person name="Engel F.B."/>
            <person name="Formstone C."/>
            <person name="Fredriksson R."/>
            <person name="Hall R.A."/>
            <person name="Harty B.L."/>
            <person name="Kirchhoff C."/>
            <person name="Knapp B."/>
            <person name="Krishnan A."/>
            <person name="Liebscher I."/>
            <person name="Lin H.H."/>
            <person name="Martinelli D.C."/>
            <person name="Monk K.R."/>
            <person name="Peeters M.C."/>
            <person name="Piao X."/>
            <person name="Promel S."/>
            <person name="Schoneberg T."/>
            <person name="Schwartz T.W."/>
            <person name="Singer K."/>
            <person name="Stacey M."/>
            <person name="Ushkaryov Y.A."/>
            <person name="Vallon M."/>
            <person name="Wolfrum U."/>
            <person name="Wright M.W."/>
            <person name="Xu L."/>
            <person name="Langenhan T."/>
            <person name="Schioth H.B."/>
        </authorList>
    </citation>
    <scope>NOMENCLATURE</scope>
</reference>
<keyword id="KW-0025">Alternative splicing</keyword>
<keyword id="KW-1015">Disulfide bond</keyword>
<keyword id="KW-0297">G-protein coupled receptor</keyword>
<keyword id="KW-0325">Glycoprotein</keyword>
<keyword id="KW-0393">Immunoglobulin domain</keyword>
<keyword id="KW-0433">Leucine-rich repeat</keyword>
<keyword id="KW-0472">Membrane</keyword>
<keyword id="KW-1267">Proteomics identification</keyword>
<keyword id="KW-0675">Receptor</keyword>
<keyword id="KW-1185">Reference proteome</keyword>
<keyword id="KW-0677">Repeat</keyword>
<keyword id="KW-0732">Signal</keyword>
<keyword id="KW-0807">Transducer</keyword>
<keyword id="KW-0812">Transmembrane</keyword>
<keyword id="KW-1133">Transmembrane helix</keyword>